<reference key="1">
    <citation type="journal article" date="2000" name="Nature">
        <title>Sequence and analysis of chromosome 1 of the plant Arabidopsis thaliana.</title>
        <authorList>
            <person name="Theologis A."/>
            <person name="Ecker J.R."/>
            <person name="Palm C.J."/>
            <person name="Federspiel N.A."/>
            <person name="Kaul S."/>
            <person name="White O."/>
            <person name="Alonso J."/>
            <person name="Altafi H."/>
            <person name="Araujo R."/>
            <person name="Bowman C.L."/>
            <person name="Brooks S.Y."/>
            <person name="Buehler E."/>
            <person name="Chan A."/>
            <person name="Chao Q."/>
            <person name="Chen H."/>
            <person name="Cheuk R.F."/>
            <person name="Chin C.W."/>
            <person name="Chung M.K."/>
            <person name="Conn L."/>
            <person name="Conway A.B."/>
            <person name="Conway A.R."/>
            <person name="Creasy T.H."/>
            <person name="Dewar K."/>
            <person name="Dunn P."/>
            <person name="Etgu P."/>
            <person name="Feldblyum T.V."/>
            <person name="Feng J.-D."/>
            <person name="Fong B."/>
            <person name="Fujii C.Y."/>
            <person name="Gill J.E."/>
            <person name="Goldsmith A.D."/>
            <person name="Haas B."/>
            <person name="Hansen N.F."/>
            <person name="Hughes B."/>
            <person name="Huizar L."/>
            <person name="Hunter J.L."/>
            <person name="Jenkins J."/>
            <person name="Johnson-Hopson C."/>
            <person name="Khan S."/>
            <person name="Khaykin E."/>
            <person name="Kim C.J."/>
            <person name="Koo H.L."/>
            <person name="Kremenetskaia I."/>
            <person name="Kurtz D.B."/>
            <person name="Kwan A."/>
            <person name="Lam B."/>
            <person name="Langin-Hooper S."/>
            <person name="Lee A."/>
            <person name="Lee J.M."/>
            <person name="Lenz C.A."/>
            <person name="Li J.H."/>
            <person name="Li Y.-P."/>
            <person name="Lin X."/>
            <person name="Liu S.X."/>
            <person name="Liu Z.A."/>
            <person name="Luros J.S."/>
            <person name="Maiti R."/>
            <person name="Marziali A."/>
            <person name="Militscher J."/>
            <person name="Miranda M."/>
            <person name="Nguyen M."/>
            <person name="Nierman W.C."/>
            <person name="Osborne B.I."/>
            <person name="Pai G."/>
            <person name="Peterson J."/>
            <person name="Pham P.K."/>
            <person name="Rizzo M."/>
            <person name="Rooney T."/>
            <person name="Rowley D."/>
            <person name="Sakano H."/>
            <person name="Salzberg S.L."/>
            <person name="Schwartz J.R."/>
            <person name="Shinn P."/>
            <person name="Southwick A.M."/>
            <person name="Sun H."/>
            <person name="Tallon L.J."/>
            <person name="Tambunga G."/>
            <person name="Toriumi M.J."/>
            <person name="Town C.D."/>
            <person name="Utterback T."/>
            <person name="Van Aken S."/>
            <person name="Vaysberg M."/>
            <person name="Vysotskaia V.S."/>
            <person name="Walker M."/>
            <person name="Wu D."/>
            <person name="Yu G."/>
            <person name="Fraser C.M."/>
            <person name="Venter J.C."/>
            <person name="Davis R.W."/>
        </authorList>
    </citation>
    <scope>NUCLEOTIDE SEQUENCE [LARGE SCALE GENOMIC DNA]</scope>
    <source>
        <strain>cv. Columbia</strain>
    </source>
</reference>
<reference key="2">
    <citation type="journal article" date="2017" name="Plant J.">
        <title>Araport11: a complete reannotation of the Arabidopsis thaliana reference genome.</title>
        <authorList>
            <person name="Cheng C.Y."/>
            <person name="Krishnakumar V."/>
            <person name="Chan A.P."/>
            <person name="Thibaud-Nissen F."/>
            <person name="Schobel S."/>
            <person name="Town C.D."/>
        </authorList>
    </citation>
    <scope>GENOME REANNOTATION</scope>
    <source>
        <strain>cv. Columbia</strain>
    </source>
</reference>
<reference key="3">
    <citation type="journal article" date="2005" name="Plant Physiol.">
        <title>Phylogenomic analysis of the receptor-like proteins of rice and Arabidopsis.</title>
        <authorList>
            <person name="Fritz-Laylin L.K."/>
            <person name="Krishnamurthy N."/>
            <person name="Toer M."/>
            <person name="Sjoelander K.V."/>
            <person name="Jones J.D."/>
        </authorList>
    </citation>
    <scope>GENE FAMILY</scope>
</reference>
<reference key="4">
    <citation type="journal article" date="2008" name="Plant Physiol.">
        <title>A genome-wide functional investigation into the roles of receptor-like proteins in Arabidopsis.</title>
        <authorList>
            <person name="Wang G."/>
            <person name="Ellendorff U."/>
            <person name="Kemp B."/>
            <person name="Mansfield J.W."/>
            <person name="Forsyth A."/>
            <person name="Mitchell K."/>
            <person name="Bastas K."/>
            <person name="Liu C.-M."/>
            <person name="Woods-Toer A."/>
            <person name="Zipfel C."/>
            <person name="de Wit P.J.G.M."/>
            <person name="Jones J.D.G."/>
            <person name="Toer M."/>
            <person name="Thomma B.P.H.J."/>
        </authorList>
    </citation>
    <scope>GENE FAMILY</scope>
    <scope>NOMENCLATURE</scope>
</reference>
<evidence type="ECO:0000255" key="1"/>
<evidence type="ECO:0000255" key="2">
    <source>
        <dbReference type="PROSITE-ProRule" id="PRU00498"/>
    </source>
</evidence>
<evidence type="ECO:0000256" key="3">
    <source>
        <dbReference type="SAM" id="MobiDB-lite"/>
    </source>
</evidence>
<evidence type="ECO:0000303" key="4">
    <source>
    </source>
</evidence>
<evidence type="ECO:0000305" key="5"/>
<evidence type="ECO:0000312" key="6">
    <source>
        <dbReference type="Araport" id="AT1G74180"/>
    </source>
</evidence>
<evidence type="ECO:0000312" key="7">
    <source>
        <dbReference type="EMBL" id="AAG51872.1"/>
    </source>
</evidence>
<keyword id="KW-1003">Cell membrane</keyword>
<keyword id="KW-0325">Glycoprotein</keyword>
<keyword id="KW-0433">Leucine-rich repeat</keyword>
<keyword id="KW-0472">Membrane</keyword>
<keyword id="KW-0675">Receptor</keyword>
<keyword id="KW-1185">Reference proteome</keyword>
<keyword id="KW-0677">Repeat</keyword>
<keyword id="KW-0732">Signal</keyword>
<keyword id="KW-0812">Transmembrane</keyword>
<keyword id="KW-1133">Transmembrane helix</keyword>
<name>RLP14_ARATH</name>
<dbReference type="EMBL" id="AC079678">
    <property type="protein sequence ID" value="AAG51872.1"/>
    <property type="status" value="ALT_SEQ"/>
    <property type="molecule type" value="Genomic_DNA"/>
</dbReference>
<dbReference type="EMBL" id="CP002684">
    <property type="protein sequence ID" value="AEE35563.1"/>
    <property type="molecule type" value="Genomic_DNA"/>
</dbReference>
<dbReference type="PIR" id="A96770">
    <property type="entry name" value="A96770"/>
</dbReference>
<dbReference type="RefSeq" id="NP_177558.4">
    <property type="nucleotide sequence ID" value="NM_106078.5"/>
</dbReference>
<dbReference type="SMR" id="F4HTV4"/>
<dbReference type="FunCoup" id="F4HTV4">
    <property type="interactions" value="323"/>
</dbReference>
<dbReference type="STRING" id="3702.F4HTV4"/>
<dbReference type="GlyCosmos" id="F4HTV4">
    <property type="glycosylation" value="19 sites, No reported glycans"/>
</dbReference>
<dbReference type="GlyGen" id="F4HTV4">
    <property type="glycosylation" value="19 sites"/>
</dbReference>
<dbReference type="PaxDb" id="3702-AT1G74180.1"/>
<dbReference type="EnsemblPlants" id="AT1G74180.1">
    <property type="protein sequence ID" value="AT1G74180.1"/>
    <property type="gene ID" value="AT1G74180"/>
</dbReference>
<dbReference type="GeneID" id="843758"/>
<dbReference type="Gramene" id="AT1G74180.1">
    <property type="protein sequence ID" value="AT1G74180.1"/>
    <property type="gene ID" value="AT1G74180"/>
</dbReference>
<dbReference type="KEGG" id="ath:AT1G74180"/>
<dbReference type="Araport" id="AT1G74180"/>
<dbReference type="TAIR" id="AT1G74180">
    <property type="gene designation" value="RLP14"/>
</dbReference>
<dbReference type="eggNOG" id="KOG0619">
    <property type="taxonomic scope" value="Eukaryota"/>
</dbReference>
<dbReference type="HOGENOM" id="CLU_000288_18_3_1"/>
<dbReference type="InParanoid" id="F4HTV4"/>
<dbReference type="PRO" id="PR:F4HTV4"/>
<dbReference type="Proteomes" id="UP000006548">
    <property type="component" value="Chromosome 1"/>
</dbReference>
<dbReference type="ExpressionAtlas" id="F4HTV4">
    <property type="expression patterns" value="baseline and differential"/>
</dbReference>
<dbReference type="GO" id="GO:0005886">
    <property type="term" value="C:plasma membrane"/>
    <property type="evidence" value="ECO:0007669"/>
    <property type="project" value="UniProtKB-SubCell"/>
</dbReference>
<dbReference type="FunFam" id="3.80.10.10:FF:000095">
    <property type="entry name" value="LRR receptor-like serine/threonine-protein kinase GSO1"/>
    <property type="match status" value="1"/>
</dbReference>
<dbReference type="FunFam" id="3.80.10.10:FF:001347">
    <property type="entry name" value="LRR receptor-like serine/threonine-protein kinase GSO2"/>
    <property type="match status" value="1"/>
</dbReference>
<dbReference type="FunFam" id="3.80.10.10:FF:001579">
    <property type="entry name" value="LRR receptor-like serine/threonine-protein kinase GSO2"/>
    <property type="match status" value="1"/>
</dbReference>
<dbReference type="FunFam" id="3.80.10.10:FF:000213">
    <property type="entry name" value="Tyrosine-sulfated glycopeptide receptor 1"/>
    <property type="match status" value="1"/>
</dbReference>
<dbReference type="Gene3D" id="3.80.10.10">
    <property type="entry name" value="Ribonuclease Inhibitor"/>
    <property type="match status" value="5"/>
</dbReference>
<dbReference type="InterPro" id="IPR001611">
    <property type="entry name" value="Leu-rich_rpt"/>
</dbReference>
<dbReference type="InterPro" id="IPR003591">
    <property type="entry name" value="Leu-rich_rpt_typical-subtyp"/>
</dbReference>
<dbReference type="InterPro" id="IPR032675">
    <property type="entry name" value="LRR_dom_sf"/>
</dbReference>
<dbReference type="InterPro" id="IPR013210">
    <property type="entry name" value="LRR_N_plant-typ"/>
</dbReference>
<dbReference type="InterPro" id="IPR055414">
    <property type="entry name" value="LRR_R13L4/SHOC2-like"/>
</dbReference>
<dbReference type="InterPro" id="IPR051502">
    <property type="entry name" value="RLP_Defense_Trigger"/>
</dbReference>
<dbReference type="PANTHER" id="PTHR48062">
    <property type="entry name" value="RECEPTOR-LIKE PROTEIN 14"/>
    <property type="match status" value="1"/>
</dbReference>
<dbReference type="PANTHER" id="PTHR48062:SF42">
    <property type="entry name" value="RECEPTOR-LIKE PROTEIN 14"/>
    <property type="match status" value="1"/>
</dbReference>
<dbReference type="Pfam" id="PF00560">
    <property type="entry name" value="LRR_1"/>
    <property type="match status" value="8"/>
</dbReference>
<dbReference type="Pfam" id="PF23598">
    <property type="entry name" value="LRR_14"/>
    <property type="match status" value="1"/>
</dbReference>
<dbReference type="Pfam" id="PF08263">
    <property type="entry name" value="LRRNT_2"/>
    <property type="match status" value="1"/>
</dbReference>
<dbReference type="PRINTS" id="PR00019">
    <property type="entry name" value="LEURICHRPT"/>
</dbReference>
<dbReference type="SMART" id="SM00365">
    <property type="entry name" value="LRR_SD22"/>
    <property type="match status" value="7"/>
</dbReference>
<dbReference type="SMART" id="SM00369">
    <property type="entry name" value="LRR_TYP"/>
    <property type="match status" value="12"/>
</dbReference>
<dbReference type="SUPFAM" id="SSF52058">
    <property type="entry name" value="L domain-like"/>
    <property type="match status" value="3"/>
</dbReference>
<dbReference type="PROSITE" id="PS51450">
    <property type="entry name" value="LRR"/>
    <property type="match status" value="20"/>
</dbReference>
<sequence>MERKVFSGQNLIWVMLLLVQLRGYKCCIEKERKALLELKKYMISKTADWGLDSVLPTWTNDTKSNCCRWEGLKCNQTSGRIIELSIGQTNFKESSLLNLSLLHPFEELRSLNLSGEIYNEFNGLFDDVEGYESLRRLRNLEILDLSSNSFNNSIFPFLNAATSLTTLFIQSNYIGGPLPIKELKNLTKLELLDLSRSGYNGSIPEFTHLEKLKALDLSANDFSSLVELQELKVLTNLEVLGLAWNHLDGPIPKEVFCEMKNLRQLDLRGNYFEGQLPVCLGNLNKLRVLDLSSNQLSGNLPASFNSLESLEYLSLSDNNFEGFFSLNPLANLTKLKVFRLSSTSEMLQVETESNWLPKFQLTVAALPFCSLGKIPNFLVYQTNLRLVDLSSNRLSGDIPTWLLENNPELKVLQLKNNSFTIFQIPTIVHKLQVLDFSANDITGVLPDNIGHVLPRLLHMNGSHNGFQGNLPSSMGEMNDISFLDLSYNNFSGELPRSLLTGCFSLITLQLSHNSFSGPILPIQTRLTSLIVLRMHNNLFTGEIGVGLRTLVNLSIFDASNNRLTGLISSSIPPDSSHLIMLLLSNNLLEGTLPPSLLAIHHLNFLDLSGNLLSGDLPSSVVNSMYGIKIFLHNNSFTGPLPVTLLENAYILDLRNNKLSGSIPQFVNTGKMITLLLRGNNLTGSIPRKLCDLTSIRLLDLSDNKLNGVIPPCLNHLSTELGEGIGLSGFSQEISFGDSLQMEFYRSTFLVDEFMLYYDSTYMIVEIEFAAKQRYDSFSGGTLDYMYGLDLSSNELSGVIPAELGDLSKLRALNLSRNLLSSSIPANFSKLKDIESLDLSYNMLQGNIPHQLTNLTSLAVFNVSFNNLSGIIPQGGQFNTFNDNSYLGNPLLCGTPTDRSCEGKKNTKEADNGGEEEEEDDDDEAAIDMVVLYWTTGSTYAIALIGILVLMCFDCPWRRTWLCIVDAFIASGKSMFS</sequence>
<protein>
    <recommendedName>
        <fullName evidence="4">Receptor-like protein 14</fullName>
        <shortName evidence="4">AtRLP14</shortName>
    </recommendedName>
</protein>
<feature type="signal peptide" evidence="1">
    <location>
        <begin position="1"/>
        <end position="26"/>
    </location>
</feature>
<feature type="chain" id="PRO_5003315074" description="Receptor-like protein 14">
    <location>
        <begin position="27"/>
        <end position="976"/>
    </location>
</feature>
<feature type="topological domain" description="Extracellular" evidence="1">
    <location>
        <begin position="27"/>
        <end position="928"/>
    </location>
</feature>
<feature type="transmembrane region" description="Helical" evidence="1">
    <location>
        <begin position="929"/>
        <end position="949"/>
    </location>
</feature>
<feature type="topological domain" description="Cytoplasmic" evidence="1">
    <location>
        <begin position="950"/>
        <end position="976"/>
    </location>
</feature>
<feature type="repeat" description="LRR 1" evidence="1">
    <location>
        <begin position="105"/>
        <end position="127"/>
    </location>
</feature>
<feature type="repeat" description="LRR 2" evidence="1">
    <location>
        <begin position="137"/>
        <end position="160"/>
    </location>
</feature>
<feature type="repeat" description="LRR 3" evidence="1">
    <location>
        <begin position="162"/>
        <end position="185"/>
    </location>
</feature>
<feature type="repeat" description="LRR 4" evidence="1">
    <location>
        <begin position="186"/>
        <end position="209"/>
    </location>
</feature>
<feature type="repeat" description="LRR 5" evidence="1">
    <location>
        <begin position="210"/>
        <end position="233"/>
    </location>
</feature>
<feature type="repeat" description="LRR 6" evidence="1">
    <location>
        <begin position="234"/>
        <end position="258"/>
    </location>
</feature>
<feature type="repeat" description="LRR 7" evidence="1">
    <location>
        <begin position="260"/>
        <end position="283"/>
    </location>
</feature>
<feature type="repeat" description="LRR 8" evidence="1">
    <location>
        <begin position="284"/>
        <end position="306"/>
    </location>
</feature>
<feature type="repeat" description="LRR 9" evidence="1">
    <location>
        <begin position="308"/>
        <end position="331"/>
    </location>
</feature>
<feature type="repeat" description="LRR 10" evidence="1">
    <location>
        <begin position="333"/>
        <end position="358"/>
    </location>
</feature>
<feature type="repeat" description="LRR 11" evidence="1">
    <location>
        <begin position="359"/>
        <end position="381"/>
    </location>
</feature>
<feature type="repeat" description="LRR 12" evidence="1">
    <location>
        <begin position="382"/>
        <end position="405"/>
    </location>
</feature>
<feature type="repeat" description="LRR 13" evidence="1">
    <location>
        <begin position="407"/>
        <end position="428"/>
    </location>
</feature>
<feature type="repeat" description="LRR 14" evidence="1">
    <location>
        <begin position="429"/>
        <end position="452"/>
    </location>
</feature>
<feature type="repeat" description="LRR 15" evidence="1">
    <location>
        <begin position="454"/>
        <end position="477"/>
    </location>
</feature>
<feature type="repeat" description="LRR 16" evidence="1">
    <location>
        <begin position="478"/>
        <end position="501"/>
    </location>
</feature>
<feature type="repeat" description="LRR 17" evidence="1">
    <location>
        <begin position="503"/>
        <end position="528"/>
    </location>
</feature>
<feature type="repeat" description="LRR 18; degenerate" evidence="5">
    <location>
        <begin position="530"/>
        <end position="549"/>
    </location>
</feature>
<feature type="repeat" description="LRR 19" evidence="1">
    <location>
        <begin position="550"/>
        <end position="573"/>
    </location>
</feature>
<feature type="repeat" description="LRR 20" evidence="1">
    <location>
        <begin position="575"/>
        <end position="599"/>
    </location>
</feature>
<feature type="repeat" description="LRR 21" evidence="1">
    <location>
        <begin position="600"/>
        <end position="623"/>
    </location>
</feature>
<feature type="repeat" description="LRR 22" evidence="1">
    <location>
        <begin position="625"/>
        <end position="645"/>
    </location>
</feature>
<feature type="repeat" description="LRR 23" evidence="1">
    <location>
        <begin position="646"/>
        <end position="669"/>
    </location>
</feature>
<feature type="repeat" description="LRR 24" evidence="1">
    <location>
        <begin position="671"/>
        <end position="692"/>
    </location>
</feature>
<feature type="repeat" description="LRR 25" evidence="1">
    <location>
        <begin position="693"/>
        <end position="715"/>
    </location>
</feature>
<feature type="repeat" description="LRR 26" evidence="1">
    <location>
        <begin position="782"/>
        <end position="805"/>
    </location>
</feature>
<feature type="repeat" description="LRR 27" evidence="1">
    <location>
        <begin position="806"/>
        <end position="829"/>
    </location>
</feature>
<feature type="repeat" description="LRR 28" evidence="1">
    <location>
        <begin position="831"/>
        <end position="854"/>
    </location>
</feature>
<feature type="repeat" description="LRR 29" evidence="1">
    <location>
        <begin position="856"/>
        <end position="879"/>
    </location>
</feature>
<feature type="region of interest" description="Disordered" evidence="3">
    <location>
        <begin position="897"/>
        <end position="922"/>
    </location>
</feature>
<feature type="compositionally biased region" description="Basic and acidic residues" evidence="3">
    <location>
        <begin position="898"/>
        <end position="910"/>
    </location>
</feature>
<feature type="compositionally biased region" description="Acidic residues" evidence="3">
    <location>
        <begin position="911"/>
        <end position="922"/>
    </location>
</feature>
<feature type="glycosylation site" description="N-linked (GlcNAc...) asparagine" evidence="2">
    <location>
        <position position="60"/>
    </location>
</feature>
<feature type="glycosylation site" description="N-linked (GlcNAc...) asparagine" evidence="2">
    <location>
        <position position="75"/>
    </location>
</feature>
<feature type="glycosylation site" description="N-linked (GlcNAc...) asparagine" evidence="2">
    <location>
        <position position="98"/>
    </location>
</feature>
<feature type="glycosylation site" description="N-linked (GlcNAc...) asparagine" evidence="2">
    <location>
        <position position="112"/>
    </location>
</feature>
<feature type="glycosylation site" description="N-linked (GlcNAc...) asparagine" evidence="2">
    <location>
        <position position="151"/>
    </location>
</feature>
<feature type="glycosylation site" description="N-linked (GlcNAc...) asparagine" evidence="2">
    <location>
        <position position="185"/>
    </location>
</feature>
<feature type="glycosylation site" description="N-linked (GlcNAc...) asparagine" evidence="2">
    <location>
        <position position="200"/>
    </location>
</feature>
<feature type="glycosylation site" description="N-linked (GlcNAc...) asparagine" evidence="2">
    <location>
        <position position="331"/>
    </location>
</feature>
<feature type="glycosylation site" description="N-linked (GlcNAc...) asparagine" evidence="2">
    <location>
        <position position="416"/>
    </location>
</feature>
<feature type="glycosylation site" description="N-linked (GlcNAc...) asparagine" evidence="2">
    <location>
        <position position="460"/>
    </location>
</feature>
<feature type="glycosylation site" description="N-linked (GlcNAc...) asparagine" evidence="2">
    <location>
        <position position="489"/>
    </location>
</feature>
<feature type="glycosylation site" description="N-linked (GlcNAc...) asparagine" evidence="2">
    <location>
        <position position="552"/>
    </location>
</feature>
<feature type="glycosylation site" description="N-linked (GlcNAc...) asparagine" evidence="2">
    <location>
        <position position="633"/>
    </location>
</feature>
<feature type="glycosylation site" description="N-linked (GlcNAc...) asparagine" evidence="2">
    <location>
        <position position="680"/>
    </location>
</feature>
<feature type="glycosylation site" description="N-linked (GlcNAc...) asparagine" evidence="2">
    <location>
        <position position="813"/>
    </location>
</feature>
<feature type="glycosylation site" description="N-linked (GlcNAc...) asparagine" evidence="2">
    <location>
        <position position="826"/>
    </location>
</feature>
<feature type="glycosylation site" description="N-linked (GlcNAc...) asparagine" evidence="2">
    <location>
        <position position="853"/>
    </location>
</feature>
<feature type="glycosylation site" description="N-linked (GlcNAc...) asparagine" evidence="2">
    <location>
        <position position="861"/>
    </location>
</feature>
<feature type="glycosylation site" description="N-linked (GlcNAc...) asparagine" evidence="2">
    <location>
        <position position="866"/>
    </location>
</feature>
<gene>
    <name evidence="4" type="primary">RLP14</name>
    <name evidence="6" type="ordered locus">At1g74180</name>
    <name evidence="7" type="ORF">F9E11.6</name>
</gene>
<accession>F4HTV4</accession>
<accession>Q9C6A7</accession>
<organism>
    <name type="scientific">Arabidopsis thaliana</name>
    <name type="common">Mouse-ear cress</name>
    <dbReference type="NCBI Taxonomy" id="3702"/>
    <lineage>
        <taxon>Eukaryota</taxon>
        <taxon>Viridiplantae</taxon>
        <taxon>Streptophyta</taxon>
        <taxon>Embryophyta</taxon>
        <taxon>Tracheophyta</taxon>
        <taxon>Spermatophyta</taxon>
        <taxon>Magnoliopsida</taxon>
        <taxon>eudicotyledons</taxon>
        <taxon>Gunneridae</taxon>
        <taxon>Pentapetalae</taxon>
        <taxon>rosids</taxon>
        <taxon>malvids</taxon>
        <taxon>Brassicales</taxon>
        <taxon>Brassicaceae</taxon>
        <taxon>Camelineae</taxon>
        <taxon>Arabidopsis</taxon>
    </lineage>
</organism>
<comment type="subcellular location">
    <subcellularLocation>
        <location evidence="5">Cell membrane</location>
        <topology evidence="5">Single-pass type I membrane protein</topology>
    </subcellularLocation>
</comment>
<comment type="similarity">
    <text evidence="5">Belongs to the RLP family.</text>
</comment>
<comment type="sequence caution" evidence="5">
    <conflict type="erroneous gene model prediction">
        <sequence resource="EMBL-CDS" id="AAG51872"/>
    </conflict>
</comment>
<proteinExistence type="inferred from homology"/>